<keyword id="KW-0963">Cytoplasm</keyword>
<keyword id="KW-0413">Isomerase</keyword>
<organism>
    <name type="scientific">Saccharomyces cerevisiae (strain YJM789)</name>
    <name type="common">Baker's yeast</name>
    <dbReference type="NCBI Taxonomy" id="307796"/>
    <lineage>
        <taxon>Eukaryota</taxon>
        <taxon>Fungi</taxon>
        <taxon>Dikarya</taxon>
        <taxon>Ascomycota</taxon>
        <taxon>Saccharomycotina</taxon>
        <taxon>Saccharomycetes</taxon>
        <taxon>Saccharomycetales</taxon>
        <taxon>Saccharomycetaceae</taxon>
        <taxon>Saccharomyces</taxon>
    </lineage>
</organism>
<sequence>MAAGVPKIDALESLGNPLEDAKRAAAYRAVDENLKFDDHKIIGIGSGSTVVYVAERIGQYLHDPKFYEVASKFICIPTGFQSRNLILDNKLQLGSIEQYPRIDIAFDGADEVDENLQLIKGGGACLFQEKLVSTSAKTFIVVADSRKKSPKHLGKNWRQGVPIEIVPSSYVRVKNDLLEQLHAEKVDIRQGGSAKAGPVVTDNNNFIIDADFGEISDPRKLHREIKLLVGVVETGLFIDNASKAYFGNSDGSVEVTEK</sequence>
<protein>
    <recommendedName>
        <fullName>Ribose-5-phosphate isomerase</fullName>
        <ecNumber>5.3.1.6</ecNumber>
    </recommendedName>
    <alternativeName>
        <fullName>D-ribose-5-phosphate ketol-isomerase</fullName>
    </alternativeName>
    <alternativeName>
        <fullName>Phosphoriboisomerase</fullName>
    </alternativeName>
</protein>
<gene>
    <name type="primary">RKI1</name>
    <name type="ORF">SCY_5163</name>
</gene>
<name>RPIA_YEAS7</name>
<comment type="catalytic activity">
    <reaction>
        <text>aldehydo-D-ribose 5-phosphate = D-ribulose 5-phosphate</text>
        <dbReference type="Rhea" id="RHEA:14657"/>
        <dbReference type="ChEBI" id="CHEBI:58121"/>
        <dbReference type="ChEBI" id="CHEBI:58273"/>
        <dbReference type="EC" id="5.3.1.6"/>
    </reaction>
</comment>
<comment type="pathway">
    <text>Carbohydrate degradation; pentose phosphate pathway; D-ribose 5-phosphate from D-ribulose 5-phosphate (non-oxidative stage): step 1/1.</text>
</comment>
<comment type="subcellular location">
    <subcellularLocation>
        <location evidence="1">Cytoplasm</location>
    </subcellularLocation>
</comment>
<comment type="similarity">
    <text evidence="1">Belongs to the ribose 5-phosphate isomerase family.</text>
</comment>
<accession>A6ZNU5</accession>
<dbReference type="EC" id="5.3.1.6"/>
<dbReference type="EMBL" id="AAFW02000030">
    <property type="protein sequence ID" value="EDN63960.1"/>
    <property type="molecule type" value="Genomic_DNA"/>
</dbReference>
<dbReference type="SMR" id="A6ZNU5"/>
<dbReference type="HOGENOM" id="CLU_056590_0_0_1"/>
<dbReference type="UniPathway" id="UPA00115">
    <property type="reaction ID" value="UER00412"/>
</dbReference>
<dbReference type="Proteomes" id="UP000007060">
    <property type="component" value="Unassembled WGS sequence"/>
</dbReference>
<dbReference type="GO" id="GO:0005737">
    <property type="term" value="C:cytoplasm"/>
    <property type="evidence" value="ECO:0007669"/>
    <property type="project" value="UniProtKB-SubCell"/>
</dbReference>
<dbReference type="GO" id="GO:0004751">
    <property type="term" value="F:ribose-5-phosphate isomerase activity"/>
    <property type="evidence" value="ECO:0007669"/>
    <property type="project" value="UniProtKB-EC"/>
</dbReference>
<dbReference type="GO" id="GO:0006014">
    <property type="term" value="P:D-ribose metabolic process"/>
    <property type="evidence" value="ECO:0007669"/>
    <property type="project" value="TreeGrafter"/>
</dbReference>
<dbReference type="GO" id="GO:0009052">
    <property type="term" value="P:pentose-phosphate shunt, non-oxidative branch"/>
    <property type="evidence" value="ECO:0007669"/>
    <property type="project" value="InterPro"/>
</dbReference>
<dbReference type="CDD" id="cd01398">
    <property type="entry name" value="RPI_A"/>
    <property type="match status" value="1"/>
</dbReference>
<dbReference type="FunFam" id="3.40.50.1360:FF:000014">
    <property type="entry name" value="Ribose 5-phosphate isomerase"/>
    <property type="match status" value="1"/>
</dbReference>
<dbReference type="FunFam" id="3.30.70.260:FF:000053">
    <property type="entry name" value="Ribose-5-phosphate isomerase, putative"/>
    <property type="match status" value="1"/>
</dbReference>
<dbReference type="Gene3D" id="3.30.70.260">
    <property type="match status" value="1"/>
</dbReference>
<dbReference type="Gene3D" id="3.40.50.1360">
    <property type="match status" value="1"/>
</dbReference>
<dbReference type="InterPro" id="IPR037171">
    <property type="entry name" value="NagB/RpiA_transferase-like"/>
</dbReference>
<dbReference type="InterPro" id="IPR004788">
    <property type="entry name" value="Ribose5P_isomerase_type_A"/>
</dbReference>
<dbReference type="NCBIfam" id="TIGR00021">
    <property type="entry name" value="rpiA"/>
    <property type="match status" value="1"/>
</dbReference>
<dbReference type="PANTHER" id="PTHR11934">
    <property type="entry name" value="RIBOSE-5-PHOSPHATE ISOMERASE"/>
    <property type="match status" value="1"/>
</dbReference>
<dbReference type="PANTHER" id="PTHR11934:SF0">
    <property type="entry name" value="RIBOSE-5-PHOSPHATE ISOMERASE"/>
    <property type="match status" value="1"/>
</dbReference>
<dbReference type="Pfam" id="PF06026">
    <property type="entry name" value="Rib_5-P_isom_A"/>
    <property type="match status" value="1"/>
</dbReference>
<dbReference type="SUPFAM" id="SSF75445">
    <property type="entry name" value="D-ribose-5-phosphate isomerase (RpiA), lid domain"/>
    <property type="match status" value="1"/>
</dbReference>
<dbReference type="SUPFAM" id="SSF100950">
    <property type="entry name" value="NagB/RpiA/CoA transferase-like"/>
    <property type="match status" value="1"/>
</dbReference>
<proteinExistence type="inferred from homology"/>
<feature type="chain" id="PRO_0000339896" description="Ribose-5-phosphate isomerase">
    <location>
        <begin position="1"/>
        <end position="258"/>
    </location>
</feature>
<evidence type="ECO:0000305" key="1"/>
<reference key="1">
    <citation type="journal article" date="2007" name="Proc. Natl. Acad. Sci. U.S.A.">
        <title>Genome sequencing and comparative analysis of Saccharomyces cerevisiae strain YJM789.</title>
        <authorList>
            <person name="Wei W."/>
            <person name="McCusker J.H."/>
            <person name="Hyman R.W."/>
            <person name="Jones T."/>
            <person name="Ning Y."/>
            <person name="Cao Z."/>
            <person name="Gu Z."/>
            <person name="Bruno D."/>
            <person name="Miranda M."/>
            <person name="Nguyen M."/>
            <person name="Wilhelmy J."/>
            <person name="Komp C."/>
            <person name="Tamse R."/>
            <person name="Wang X."/>
            <person name="Jia P."/>
            <person name="Luedi P."/>
            <person name="Oefner P.J."/>
            <person name="David L."/>
            <person name="Dietrich F.S."/>
            <person name="Li Y."/>
            <person name="Davis R.W."/>
            <person name="Steinmetz L.M."/>
        </authorList>
    </citation>
    <scope>NUCLEOTIDE SEQUENCE [LARGE SCALE GENOMIC DNA]</scope>
    <source>
        <strain>YJM789</strain>
    </source>
</reference>